<keyword id="KW-0963">Cytoplasm</keyword>
<keyword id="KW-1185">Reference proteome</keyword>
<keyword id="KW-0690">Ribosome biogenesis</keyword>
<keyword id="KW-0694">RNA-binding</keyword>
<keyword id="KW-0699">rRNA-binding</keyword>
<reference key="1">
    <citation type="submission" date="2003-06" db="EMBL/GenBank/DDBJ databases">
        <title>The complete genome sequence of Haemophilus ducreyi.</title>
        <authorList>
            <person name="Munson R.S. Jr."/>
            <person name="Ray W.C."/>
            <person name="Mahairas G."/>
            <person name="Sabo P."/>
            <person name="Mungur R."/>
            <person name="Johnson L."/>
            <person name="Nguyen D."/>
            <person name="Wang J."/>
            <person name="Forst C."/>
            <person name="Hood L."/>
        </authorList>
    </citation>
    <scope>NUCLEOTIDE SEQUENCE [LARGE SCALE GENOMIC DNA]</scope>
    <source>
        <strain>35000HP / ATCC 700724</strain>
    </source>
</reference>
<gene>
    <name evidence="1" type="primary">darP</name>
    <name type="ordered locus">HD_1362</name>
</gene>
<comment type="function">
    <text evidence="1">Member of a network of 50S ribosomal subunit biogenesis factors which assembles along the 30S-50S interface, preventing incorrect 23S rRNA structures from forming. Promotes peptidyl transferase center (PTC) maturation.</text>
</comment>
<comment type="subcellular location">
    <subcellularLocation>
        <location evidence="1">Cytoplasm</location>
    </subcellularLocation>
    <text evidence="1">Associates with late stage pre-50S ribosomal subunits.</text>
</comment>
<comment type="similarity">
    <text evidence="1">Belongs to the DarP family.</text>
</comment>
<accession>Q7VLR0</accession>
<sequence>MAKKRGKPEIDWTDDDKEIIWVSKSEIKRDSEHLKKLGAELIELTPQNLEKIPLDEDLKYAIRQAQSFKLEARRRQIQFIGKLLRNRDSAPIQDALDKVKNRHNQQQALLHKLELIRDQLINMGDASLNQLLSEYPQLDRQHLRNLIRMAQKEKQINKPAKNYHEILQYLKSELIV</sequence>
<feature type="chain" id="PRO_0000208216" description="Dual-action ribosomal maturation protein DarP">
    <location>
        <begin position="1"/>
        <end position="176"/>
    </location>
</feature>
<evidence type="ECO:0000255" key="1">
    <source>
        <dbReference type="HAMAP-Rule" id="MF_00765"/>
    </source>
</evidence>
<name>DARP_HAEDU</name>
<organism>
    <name type="scientific">Haemophilus ducreyi (strain 35000HP / ATCC 700724)</name>
    <dbReference type="NCBI Taxonomy" id="233412"/>
    <lineage>
        <taxon>Bacteria</taxon>
        <taxon>Pseudomonadati</taxon>
        <taxon>Pseudomonadota</taxon>
        <taxon>Gammaproteobacteria</taxon>
        <taxon>Pasteurellales</taxon>
        <taxon>Pasteurellaceae</taxon>
        <taxon>Haemophilus</taxon>
    </lineage>
</organism>
<proteinExistence type="inferred from homology"/>
<protein>
    <recommendedName>
        <fullName evidence="1">Dual-action ribosomal maturation protein DarP</fullName>
    </recommendedName>
    <alternativeName>
        <fullName evidence="1">Large ribosomal subunit assembly factor DarP</fullName>
    </alternativeName>
</protein>
<dbReference type="EMBL" id="AE017143">
    <property type="protein sequence ID" value="AAP96175.1"/>
    <property type="molecule type" value="Genomic_DNA"/>
</dbReference>
<dbReference type="RefSeq" id="WP_010945224.1">
    <property type="nucleotide sequence ID" value="NC_002940.2"/>
</dbReference>
<dbReference type="SMR" id="Q7VLR0"/>
<dbReference type="STRING" id="233412.HD_1362"/>
<dbReference type="KEGG" id="hdu:HD_1362"/>
<dbReference type="eggNOG" id="COG3028">
    <property type="taxonomic scope" value="Bacteria"/>
</dbReference>
<dbReference type="HOGENOM" id="CLU_106757_2_0_6"/>
<dbReference type="OrthoDB" id="5293604at2"/>
<dbReference type="Proteomes" id="UP000001022">
    <property type="component" value="Chromosome"/>
</dbReference>
<dbReference type="GO" id="GO:0005829">
    <property type="term" value="C:cytosol"/>
    <property type="evidence" value="ECO:0007669"/>
    <property type="project" value="TreeGrafter"/>
</dbReference>
<dbReference type="GO" id="GO:0043022">
    <property type="term" value="F:ribosome binding"/>
    <property type="evidence" value="ECO:0007669"/>
    <property type="project" value="UniProtKB-UniRule"/>
</dbReference>
<dbReference type="GO" id="GO:0019843">
    <property type="term" value="F:rRNA binding"/>
    <property type="evidence" value="ECO:0007669"/>
    <property type="project" value="UniProtKB-UniRule"/>
</dbReference>
<dbReference type="GO" id="GO:1902626">
    <property type="term" value="P:assembly of large subunit precursor of preribosome"/>
    <property type="evidence" value="ECO:0007669"/>
    <property type="project" value="UniProtKB-UniRule"/>
</dbReference>
<dbReference type="CDD" id="cd16331">
    <property type="entry name" value="YjgA-like"/>
    <property type="match status" value="1"/>
</dbReference>
<dbReference type="Gene3D" id="1.10.60.30">
    <property type="entry name" value="PSPTO4464-like domains"/>
    <property type="match status" value="2"/>
</dbReference>
<dbReference type="HAMAP" id="MF_00765">
    <property type="entry name" value="DarP"/>
    <property type="match status" value="1"/>
</dbReference>
<dbReference type="InterPro" id="IPR006839">
    <property type="entry name" value="DarP"/>
</dbReference>
<dbReference type="InterPro" id="IPR023153">
    <property type="entry name" value="DarP_sf"/>
</dbReference>
<dbReference type="NCBIfam" id="NF003593">
    <property type="entry name" value="PRK05255.1-1"/>
    <property type="match status" value="1"/>
</dbReference>
<dbReference type="PANTHER" id="PTHR38101">
    <property type="entry name" value="UPF0307 PROTEIN YJGA"/>
    <property type="match status" value="1"/>
</dbReference>
<dbReference type="PANTHER" id="PTHR38101:SF1">
    <property type="entry name" value="UPF0307 PROTEIN YJGA"/>
    <property type="match status" value="1"/>
</dbReference>
<dbReference type="Pfam" id="PF04751">
    <property type="entry name" value="DarP"/>
    <property type="match status" value="1"/>
</dbReference>
<dbReference type="PIRSF" id="PIRSF016183">
    <property type="entry name" value="UCP016183"/>
    <property type="match status" value="1"/>
</dbReference>
<dbReference type="SUPFAM" id="SSF158710">
    <property type="entry name" value="PSPTO4464-like"/>
    <property type="match status" value="1"/>
</dbReference>